<sequence length="200" mass="22312">MAQQRALPQSKETLLQSYNKRLKDDIKSIMDNFTEIIKTAKIEDETQVSRATQGEQDNYEMHVRAANIVRAGESLMKLVSDLKQFLILNDFPSVNEAIDQRNQQLRALQEECDRKLITLRDEVSIDLYELEEEYYSSSSSLCEANDLPLCEAYWRLDLDTDSADGLSAPLLASPETGAGPLQSAAPVHSHGGGPGPTEHT</sequence>
<evidence type="ECO:0000250" key="1"/>
<evidence type="ECO:0000255" key="2"/>
<evidence type="ECO:0000256" key="3">
    <source>
        <dbReference type="SAM" id="MobiDB-lite"/>
    </source>
</evidence>
<evidence type="ECO:0000303" key="4">
    <source>
    </source>
</evidence>
<evidence type="ECO:0000305" key="5"/>
<evidence type="ECO:0000312" key="6">
    <source>
        <dbReference type="EMBL" id="AAI27520.1"/>
    </source>
</evidence>
<organism>
    <name type="scientific">Rattus norvegicus</name>
    <name type="common">Rat</name>
    <dbReference type="NCBI Taxonomy" id="10116"/>
    <lineage>
        <taxon>Eukaryota</taxon>
        <taxon>Metazoa</taxon>
        <taxon>Chordata</taxon>
        <taxon>Craniata</taxon>
        <taxon>Vertebrata</taxon>
        <taxon>Euteleostomi</taxon>
        <taxon>Mammalia</taxon>
        <taxon>Eutheria</taxon>
        <taxon>Euarchontoglires</taxon>
        <taxon>Glires</taxon>
        <taxon>Rodentia</taxon>
        <taxon>Myomorpha</taxon>
        <taxon>Muroidea</taxon>
        <taxon>Muridae</taxon>
        <taxon>Murinae</taxon>
        <taxon>Rattus</taxon>
    </lineage>
</organism>
<accession>A0JPN6</accession>
<keyword id="KW-0010">Activator</keyword>
<keyword id="KW-0025">Alternative splicing</keyword>
<keyword id="KW-0175">Coiled coil</keyword>
<keyword id="KW-0539">Nucleus</keyword>
<keyword id="KW-1185">Reference proteome</keyword>
<keyword id="KW-0804">Transcription</keyword>
<keyword id="KW-0805">Transcription regulation</keyword>
<gene>
    <name type="primary">Med22</name>
    <name type="synonym">Surf5</name>
</gene>
<feature type="chain" id="PRO_0000278122" description="Mediator of RNA polymerase II transcription subunit 22">
    <location>
        <begin position="1"/>
        <end position="200"/>
    </location>
</feature>
<feature type="region of interest" description="Disordered" evidence="3">
    <location>
        <begin position="167"/>
        <end position="200"/>
    </location>
</feature>
<feature type="coiled-coil region" evidence="2">
    <location>
        <begin position="93"/>
        <end position="122"/>
    </location>
</feature>
<feature type="compositionally biased region" description="Gly residues" evidence="3">
    <location>
        <begin position="190"/>
        <end position="200"/>
    </location>
</feature>
<feature type="splice variant" id="VSP_028995" description="In isoform 2." evidence="4">
    <original>SSS</original>
    <variation>RYK</variation>
    <location>
        <begin position="138"/>
        <end position="140"/>
    </location>
</feature>
<feature type="splice variant" id="VSP_028996" description="In isoform 2." evidence="4">
    <location>
        <begin position="141"/>
        <end position="200"/>
    </location>
</feature>
<name>MED22_RAT</name>
<reference evidence="6" key="1">
    <citation type="journal article" date="2004" name="Genome Res.">
        <title>The status, quality, and expansion of the NIH full-length cDNA project: the Mammalian Gene Collection (MGC).</title>
        <authorList>
            <consortium name="The MGC Project Team"/>
        </authorList>
    </citation>
    <scope>NUCLEOTIDE SEQUENCE [LARGE SCALE MRNA] (ISOFORMS 1 AND 2)</scope>
    <source>
        <tissue evidence="6">Heart</tissue>
    </source>
</reference>
<proteinExistence type="evidence at transcript level"/>
<dbReference type="EMBL" id="BC127519">
    <property type="protein sequence ID" value="AAI27520.1"/>
    <property type="molecule type" value="mRNA"/>
</dbReference>
<dbReference type="EMBL" id="DN932977">
    <property type="status" value="NOT_ANNOTATED_CDS"/>
    <property type="molecule type" value="mRNA"/>
</dbReference>
<dbReference type="RefSeq" id="NP_001071147.1">
    <molecule id="A0JPN6-1"/>
    <property type="nucleotide sequence ID" value="NM_001077679.1"/>
</dbReference>
<dbReference type="RefSeq" id="XP_003749478.1">
    <property type="nucleotide sequence ID" value="XM_003749430.3"/>
</dbReference>
<dbReference type="SMR" id="A0JPN6"/>
<dbReference type="FunCoup" id="A0JPN6">
    <property type="interactions" value="2223"/>
</dbReference>
<dbReference type="STRING" id="10116.ENSRNOP00000006720"/>
<dbReference type="GlyGen" id="A0JPN6">
    <property type="glycosylation" value="1 site"/>
</dbReference>
<dbReference type="PhosphoSitePlus" id="A0JPN6"/>
<dbReference type="PaxDb" id="10116-ENSRNOP00000006720"/>
<dbReference type="PeptideAtlas" id="A0JPN6"/>
<dbReference type="Ensembl" id="ENSRNOT00000006720.5">
    <molecule id="A0JPN6-1"/>
    <property type="protein sequence ID" value="ENSRNOP00000006720.3"/>
    <property type="gene ID" value="ENSRNOG00000005059.6"/>
</dbReference>
<dbReference type="GeneID" id="499762"/>
<dbReference type="KEGG" id="rno:499762"/>
<dbReference type="UCSC" id="RGD:1564893">
    <molecule id="A0JPN6-1"/>
    <property type="organism name" value="rat"/>
</dbReference>
<dbReference type="AGR" id="RGD:1564893"/>
<dbReference type="CTD" id="6837"/>
<dbReference type="RGD" id="1564893">
    <property type="gene designation" value="Med22"/>
</dbReference>
<dbReference type="eggNOG" id="KOG3304">
    <property type="taxonomic scope" value="Eukaryota"/>
</dbReference>
<dbReference type="GeneTree" id="ENSGT00390000004339"/>
<dbReference type="HOGENOM" id="CLU_117242_0_0_1"/>
<dbReference type="InParanoid" id="A0JPN6"/>
<dbReference type="OMA" id="KQAECDQ"/>
<dbReference type="OrthoDB" id="203279at2759"/>
<dbReference type="PhylomeDB" id="A0JPN6"/>
<dbReference type="TreeFam" id="TF323390"/>
<dbReference type="PRO" id="PR:A0JPN6"/>
<dbReference type="Proteomes" id="UP000002494">
    <property type="component" value="Chromosome 3"/>
</dbReference>
<dbReference type="Bgee" id="ENSRNOG00000005059">
    <property type="expression patterns" value="Expressed in cerebellum and 19 other cell types or tissues"/>
</dbReference>
<dbReference type="GO" id="GO:0070847">
    <property type="term" value="C:core mediator complex"/>
    <property type="evidence" value="ECO:0000266"/>
    <property type="project" value="RGD"/>
</dbReference>
<dbReference type="GO" id="GO:0016592">
    <property type="term" value="C:mediator complex"/>
    <property type="evidence" value="ECO:0000266"/>
    <property type="project" value="RGD"/>
</dbReference>
<dbReference type="GO" id="GO:0005634">
    <property type="term" value="C:nucleus"/>
    <property type="evidence" value="ECO:0000266"/>
    <property type="project" value="RGD"/>
</dbReference>
<dbReference type="GO" id="GO:0003712">
    <property type="term" value="F:transcription coregulator activity"/>
    <property type="evidence" value="ECO:0007669"/>
    <property type="project" value="InterPro"/>
</dbReference>
<dbReference type="GO" id="GO:0006357">
    <property type="term" value="P:regulation of transcription by RNA polymerase II"/>
    <property type="evidence" value="ECO:0007669"/>
    <property type="project" value="InterPro"/>
</dbReference>
<dbReference type="InterPro" id="IPR009332">
    <property type="entry name" value="Med22"/>
</dbReference>
<dbReference type="PANTHER" id="PTHR12434">
    <property type="entry name" value="MEDIATOR OF RNA POLYMERASE II TRANSCRIPTION SUBUNIT 22"/>
    <property type="match status" value="1"/>
</dbReference>
<dbReference type="PANTHER" id="PTHR12434:SF6">
    <property type="entry name" value="MEDIATOR OF RNA POLYMERASE II TRANSCRIPTION SUBUNIT 22"/>
    <property type="match status" value="1"/>
</dbReference>
<dbReference type="Pfam" id="PF06179">
    <property type="entry name" value="Med22"/>
    <property type="match status" value="1"/>
</dbReference>
<comment type="function">
    <text evidence="1">Component of the Mediator complex, a coactivator involved in the regulated transcription of nearly all RNA polymerase II-dependent genes. Mediator functions as a bridge to convey information from gene-specific regulatory proteins to the basal RNA polymerase II transcription machinery. Mediator is recruited to promoters by direct interactions with regulatory proteins and serves as a scaffold for the assembly of a functional preinitiation complex with RNA polymerase II and the general transcription factors (By similarity).</text>
</comment>
<comment type="subunit">
    <text evidence="1">Component of the Mediator complex, which is composed of MED1, MED4, MED6, MED7, MED8, MED9, MED10, MED11, MED12, MED13, MED13L, MED14, MED15, MED16, MED17, MED18, MED19, MED20, MED21, MED22, MED23, MED24, MED25, MED26, MED27, MED29, MED30, MED31, CCNC, CDK8 and CDC2L6/CDK11. The MED12, MED13, CCNC and CDK8 subunits form a distinct module termed the CDK8 module. Mediator containing the CDK8 module is less active than Mediator lacking this module in supporting transcriptional activation. Individual preparations of the Mediator complex lacking one or more distinct subunits have been variously termed ARC, CRSP, DRIP, PC2, SMCC and TRAP (By similarity).</text>
</comment>
<comment type="subcellular location">
    <subcellularLocation>
        <location evidence="5">Nucleus</location>
    </subcellularLocation>
</comment>
<comment type="alternative products">
    <event type="alternative splicing"/>
    <isoform>
        <id>A0JPN6-1</id>
        <name>1</name>
        <name>Surf5B</name>
        <sequence type="displayed"/>
    </isoform>
    <isoform>
        <id>A0JPN6-2</id>
        <name>2</name>
        <name>Surf5A</name>
        <sequence type="described" ref="VSP_028995 VSP_028996"/>
    </isoform>
</comment>
<comment type="similarity">
    <text evidence="5">Belongs to the Mediator complex subunit 22 family.</text>
</comment>
<protein>
    <recommendedName>
        <fullName>Mediator of RNA polymerase II transcription subunit 22</fullName>
    </recommendedName>
    <alternativeName>
        <fullName>Mediator complex subunit 22</fullName>
    </alternativeName>
    <alternativeName>
        <fullName>Surfeit locus protein 5</fullName>
    </alternativeName>
</protein>